<feature type="chain" id="PRO_0000357949" description="NADH-quinone oxidoreductase subunit D">
    <location>
        <begin position="1"/>
        <end position="409"/>
    </location>
</feature>
<accession>Q72GD1</accession>
<dbReference type="EC" id="7.1.1.-"/>
<dbReference type="EMBL" id="AE017221">
    <property type="protein sequence ID" value="AAS82259.1"/>
    <property type="molecule type" value="Genomic_DNA"/>
</dbReference>
<dbReference type="RefSeq" id="WP_011174269.1">
    <property type="nucleotide sequence ID" value="NC_005835.1"/>
</dbReference>
<dbReference type="SMR" id="Q72GD1"/>
<dbReference type="KEGG" id="tth:TT_C1917"/>
<dbReference type="eggNOG" id="COG0649">
    <property type="taxonomic scope" value="Bacteria"/>
</dbReference>
<dbReference type="HOGENOM" id="CLU_015134_1_2_0"/>
<dbReference type="OrthoDB" id="9801496at2"/>
<dbReference type="Proteomes" id="UP000000592">
    <property type="component" value="Chromosome"/>
</dbReference>
<dbReference type="GO" id="GO:0005886">
    <property type="term" value="C:plasma membrane"/>
    <property type="evidence" value="ECO:0007669"/>
    <property type="project" value="UniProtKB-SubCell"/>
</dbReference>
<dbReference type="GO" id="GO:0051287">
    <property type="term" value="F:NAD binding"/>
    <property type="evidence" value="ECO:0007669"/>
    <property type="project" value="InterPro"/>
</dbReference>
<dbReference type="GO" id="GO:0050136">
    <property type="term" value="F:NADH:ubiquinone reductase (non-electrogenic) activity"/>
    <property type="evidence" value="ECO:0007669"/>
    <property type="project" value="UniProtKB-UniRule"/>
</dbReference>
<dbReference type="GO" id="GO:0048038">
    <property type="term" value="F:quinone binding"/>
    <property type="evidence" value="ECO:0007669"/>
    <property type="project" value="UniProtKB-KW"/>
</dbReference>
<dbReference type="Gene3D" id="1.10.645.10">
    <property type="entry name" value="Cytochrome-c3 Hydrogenase, chain B"/>
    <property type="match status" value="1"/>
</dbReference>
<dbReference type="HAMAP" id="MF_01358">
    <property type="entry name" value="NDH1_NuoD"/>
    <property type="match status" value="1"/>
</dbReference>
<dbReference type="InterPro" id="IPR001135">
    <property type="entry name" value="NADH_Q_OxRdtase_suD"/>
</dbReference>
<dbReference type="InterPro" id="IPR014029">
    <property type="entry name" value="NADH_UbQ_OxRdtase_49kDa_CS"/>
</dbReference>
<dbReference type="InterPro" id="IPR022885">
    <property type="entry name" value="NDH1_su_D/H"/>
</dbReference>
<dbReference type="InterPro" id="IPR029014">
    <property type="entry name" value="NiFe-Hase_large"/>
</dbReference>
<dbReference type="NCBIfam" id="TIGR01962">
    <property type="entry name" value="NuoD"/>
    <property type="match status" value="1"/>
</dbReference>
<dbReference type="NCBIfam" id="NF004739">
    <property type="entry name" value="PRK06075.1"/>
    <property type="match status" value="1"/>
</dbReference>
<dbReference type="PANTHER" id="PTHR11993:SF10">
    <property type="entry name" value="NADH DEHYDROGENASE [UBIQUINONE] IRON-SULFUR PROTEIN 2, MITOCHONDRIAL"/>
    <property type="match status" value="1"/>
</dbReference>
<dbReference type="PANTHER" id="PTHR11993">
    <property type="entry name" value="NADH-UBIQUINONE OXIDOREDUCTASE 49 KDA SUBUNIT"/>
    <property type="match status" value="1"/>
</dbReference>
<dbReference type="Pfam" id="PF00346">
    <property type="entry name" value="Complex1_49kDa"/>
    <property type="match status" value="1"/>
</dbReference>
<dbReference type="SUPFAM" id="SSF56762">
    <property type="entry name" value="HydB/Nqo4-like"/>
    <property type="match status" value="1"/>
</dbReference>
<dbReference type="PROSITE" id="PS00535">
    <property type="entry name" value="COMPLEX1_49K"/>
    <property type="match status" value="1"/>
</dbReference>
<proteinExistence type="inferred from homology"/>
<gene>
    <name type="primary">nuoD</name>
    <name type="ordered locus">TT_C1917</name>
</gene>
<evidence type="ECO:0000250" key="1"/>
<evidence type="ECO:0000305" key="2"/>
<name>NUOD_THET2</name>
<sequence>MREEFLEEIPLDAPPEEAKELRTEVMTLNVGPQHPSTHGVLRLMVTLSGEEVLEVVPHIGYLHTGFEKTMEHRTYLQNITYTPRMDYLHSFAHDLAYALAVEKLLGAVVPPRAETIRVILNELSRLASHLVFLGTGLLDLGALTPFFYAFRERETILDLFEWVTGQRFHHNYIRIGGVKEDLPEEFVPELKKFLEVMPHRIDEYEALFAESPIFYERARGVGVIPPEVAIDLGLTGGSLRASGVNYDVRKAYPYSGYETYTFDVPLGERGDVFDRMLVRIREMRESVKIIKQALERLEPGPVRDPNPQITPPPRHLLETSMEAVIYHFKHYTEGFHPPKGEVYVPTESARGELGYYIVSDGGSMPYRVKVRAPSFVNLQSLPYACKGEQVPDMVAIIASLDPVMGDVDR</sequence>
<keyword id="KW-0997">Cell inner membrane</keyword>
<keyword id="KW-1003">Cell membrane</keyword>
<keyword id="KW-0472">Membrane</keyword>
<keyword id="KW-0520">NAD</keyword>
<keyword id="KW-0874">Quinone</keyword>
<keyword id="KW-1278">Translocase</keyword>
<keyword id="KW-0813">Transport</keyword>
<reference key="1">
    <citation type="journal article" date="2004" name="Nat. Biotechnol.">
        <title>The genome sequence of the extreme thermophile Thermus thermophilus.</title>
        <authorList>
            <person name="Henne A."/>
            <person name="Brueggemann H."/>
            <person name="Raasch C."/>
            <person name="Wiezer A."/>
            <person name="Hartsch T."/>
            <person name="Liesegang H."/>
            <person name="Johann A."/>
            <person name="Lienard T."/>
            <person name="Gohl O."/>
            <person name="Martinez-Arias R."/>
            <person name="Jacobi C."/>
            <person name="Starkuviene V."/>
            <person name="Schlenczeck S."/>
            <person name="Dencker S."/>
            <person name="Huber R."/>
            <person name="Klenk H.-P."/>
            <person name="Kramer W."/>
            <person name="Merkl R."/>
            <person name="Gottschalk G."/>
            <person name="Fritz H.-J."/>
        </authorList>
    </citation>
    <scope>NUCLEOTIDE SEQUENCE [LARGE SCALE GENOMIC DNA]</scope>
    <source>
        <strain>ATCC BAA-163 / DSM 7039 / HB27</strain>
    </source>
</reference>
<protein>
    <recommendedName>
        <fullName>NADH-quinone oxidoreductase subunit D</fullName>
        <ecNumber>7.1.1.-</ecNumber>
    </recommendedName>
    <alternativeName>
        <fullName>NADH dehydrogenase I subunit D</fullName>
    </alternativeName>
    <alternativeName>
        <fullName>NDH-1 subunit D</fullName>
    </alternativeName>
</protein>
<organism>
    <name type="scientific">Thermus thermophilus (strain ATCC BAA-163 / DSM 7039 / HB27)</name>
    <dbReference type="NCBI Taxonomy" id="262724"/>
    <lineage>
        <taxon>Bacteria</taxon>
        <taxon>Thermotogati</taxon>
        <taxon>Deinococcota</taxon>
        <taxon>Deinococci</taxon>
        <taxon>Thermales</taxon>
        <taxon>Thermaceae</taxon>
        <taxon>Thermus</taxon>
    </lineage>
</organism>
<comment type="function">
    <text evidence="1">NDH-1 shuttles electrons from NADH, via FMN and iron-sulfur (Fe-S) centers, to quinones in the respiratory chain. The immediate electron acceptor for the enzyme in this species is believed to be ubiquinone. Couples the redox reaction to proton translocation (for every two electrons transferred, four hydrogen ions are translocated across the cytoplasmic membrane), and thus conserves the redox energy in a proton gradient.</text>
</comment>
<comment type="catalytic activity">
    <reaction>
        <text>a quinone + NADH + 5 H(+)(in) = a quinol + NAD(+) + 4 H(+)(out)</text>
        <dbReference type="Rhea" id="RHEA:57888"/>
        <dbReference type="ChEBI" id="CHEBI:15378"/>
        <dbReference type="ChEBI" id="CHEBI:24646"/>
        <dbReference type="ChEBI" id="CHEBI:57540"/>
        <dbReference type="ChEBI" id="CHEBI:57945"/>
        <dbReference type="ChEBI" id="CHEBI:132124"/>
    </reaction>
</comment>
<comment type="subunit">
    <text evidence="1">NDH-1 is composed of 14 different subunits. Subunits NuoB, C, D, E, F, and G constitute the peripheral sector of the complex (By similarity).</text>
</comment>
<comment type="subcellular location">
    <subcellularLocation>
        <location evidence="1">Cell inner membrane</location>
        <topology evidence="1">Peripheral membrane protein</topology>
        <orientation evidence="1">Cytoplasmic side</orientation>
    </subcellularLocation>
</comment>
<comment type="similarity">
    <text evidence="2">Belongs to the complex I 49 kDa subunit family.</text>
</comment>